<sequence>MSIGLPRGVQDILPDEIPFWHLIENIARSLFEKYNYEEIRTPIFEFTELFVKGTGETTDIVMKEMYTFQDKKGRSLTLRPEGTPGVIRAYLMNKIYTTKPIWKVYYIGPMFRYERPQSGRYRQFHQLGVEVLGRKDPYIDFEVISLAVEILKSLKLENLEIEINSLGCLKCRPAYREALKNYFYQYKDLLSPIDQERLERNPLRILDSKDEKIIPLKENAPQPLDFLCNDCKDHFDKVLRYLQEASLNFKISPKLVRGLDYYTRTVFEITTTSLGAQNAVVGGGRYDNLVETYGGPSTPGLGFALGMERLILLIKQQDKIKIEKPSLFFLAIENEKYIKKAVEISKILRINHRVEIGSPNEPLRTQLKWADKLNSDYVIFINQMIEKDILRIKNFKTGEEKEIRIENLKEL</sequence>
<gene>
    <name evidence="1" type="primary">hisS</name>
    <name type="ordered locus">Dtur_0969</name>
</gene>
<comment type="catalytic activity">
    <reaction evidence="1">
        <text>tRNA(His) + L-histidine + ATP = L-histidyl-tRNA(His) + AMP + diphosphate + H(+)</text>
        <dbReference type="Rhea" id="RHEA:17313"/>
        <dbReference type="Rhea" id="RHEA-COMP:9665"/>
        <dbReference type="Rhea" id="RHEA-COMP:9689"/>
        <dbReference type="ChEBI" id="CHEBI:15378"/>
        <dbReference type="ChEBI" id="CHEBI:30616"/>
        <dbReference type="ChEBI" id="CHEBI:33019"/>
        <dbReference type="ChEBI" id="CHEBI:57595"/>
        <dbReference type="ChEBI" id="CHEBI:78442"/>
        <dbReference type="ChEBI" id="CHEBI:78527"/>
        <dbReference type="ChEBI" id="CHEBI:456215"/>
        <dbReference type="EC" id="6.1.1.21"/>
    </reaction>
</comment>
<comment type="subunit">
    <text evidence="1">Homodimer.</text>
</comment>
<comment type="subcellular location">
    <subcellularLocation>
        <location evidence="1">Cytoplasm</location>
    </subcellularLocation>
</comment>
<comment type="similarity">
    <text evidence="1">Belongs to the class-II aminoacyl-tRNA synthetase family.</text>
</comment>
<accession>B8E1C1</accession>
<evidence type="ECO:0000255" key="1">
    <source>
        <dbReference type="HAMAP-Rule" id="MF_00127"/>
    </source>
</evidence>
<proteinExistence type="inferred from homology"/>
<organism>
    <name type="scientific">Dictyoglomus turgidum (strain DSM 6724 / Z-1310)</name>
    <dbReference type="NCBI Taxonomy" id="515635"/>
    <lineage>
        <taxon>Bacteria</taxon>
        <taxon>Pseudomonadati</taxon>
        <taxon>Dictyoglomota</taxon>
        <taxon>Dictyoglomia</taxon>
        <taxon>Dictyoglomales</taxon>
        <taxon>Dictyoglomaceae</taxon>
        <taxon>Dictyoglomus</taxon>
    </lineage>
</organism>
<dbReference type="EC" id="6.1.1.21" evidence="1"/>
<dbReference type="EMBL" id="CP001251">
    <property type="protein sequence ID" value="ACK42249.1"/>
    <property type="molecule type" value="Genomic_DNA"/>
</dbReference>
<dbReference type="RefSeq" id="WP_012583333.1">
    <property type="nucleotide sequence ID" value="NC_011661.1"/>
</dbReference>
<dbReference type="RefSeq" id="YP_002352863.1">
    <property type="nucleotide sequence ID" value="NC_011661.1"/>
</dbReference>
<dbReference type="SMR" id="B8E1C1"/>
<dbReference type="FunCoup" id="B8E1C1">
    <property type="interactions" value="366"/>
</dbReference>
<dbReference type="STRING" id="515635.Dtur_0969"/>
<dbReference type="EnsemblBacteria" id="ACK42249">
    <property type="protein sequence ID" value="ACK42249"/>
    <property type="gene ID" value="Dtur_0969"/>
</dbReference>
<dbReference type="KEGG" id="dtu:Dtur_0969"/>
<dbReference type="PATRIC" id="fig|515635.4.peg.1006"/>
<dbReference type="eggNOG" id="COG0124">
    <property type="taxonomic scope" value="Bacteria"/>
</dbReference>
<dbReference type="HOGENOM" id="CLU_025113_1_1_0"/>
<dbReference type="InParanoid" id="B8E1C1"/>
<dbReference type="OrthoDB" id="9800814at2"/>
<dbReference type="Proteomes" id="UP000007719">
    <property type="component" value="Chromosome"/>
</dbReference>
<dbReference type="GO" id="GO:0005737">
    <property type="term" value="C:cytoplasm"/>
    <property type="evidence" value="ECO:0007669"/>
    <property type="project" value="UniProtKB-SubCell"/>
</dbReference>
<dbReference type="GO" id="GO:0005524">
    <property type="term" value="F:ATP binding"/>
    <property type="evidence" value="ECO:0007669"/>
    <property type="project" value="UniProtKB-UniRule"/>
</dbReference>
<dbReference type="GO" id="GO:0004821">
    <property type="term" value="F:histidine-tRNA ligase activity"/>
    <property type="evidence" value="ECO:0000318"/>
    <property type="project" value="GO_Central"/>
</dbReference>
<dbReference type="GO" id="GO:0006427">
    <property type="term" value="P:histidyl-tRNA aminoacylation"/>
    <property type="evidence" value="ECO:0000318"/>
    <property type="project" value="GO_Central"/>
</dbReference>
<dbReference type="CDD" id="cd00773">
    <property type="entry name" value="HisRS-like_core"/>
    <property type="match status" value="1"/>
</dbReference>
<dbReference type="FunFam" id="3.30.930.10:FF:000005">
    <property type="entry name" value="Histidine--tRNA ligase"/>
    <property type="match status" value="1"/>
</dbReference>
<dbReference type="Gene3D" id="3.40.50.800">
    <property type="entry name" value="Anticodon-binding domain"/>
    <property type="match status" value="1"/>
</dbReference>
<dbReference type="Gene3D" id="3.30.930.10">
    <property type="entry name" value="Bira Bifunctional Protein, Domain 2"/>
    <property type="match status" value="1"/>
</dbReference>
<dbReference type="HAMAP" id="MF_00127">
    <property type="entry name" value="His_tRNA_synth"/>
    <property type="match status" value="1"/>
</dbReference>
<dbReference type="InterPro" id="IPR006195">
    <property type="entry name" value="aa-tRNA-synth_II"/>
</dbReference>
<dbReference type="InterPro" id="IPR045864">
    <property type="entry name" value="aa-tRNA-synth_II/BPL/LPL"/>
</dbReference>
<dbReference type="InterPro" id="IPR004154">
    <property type="entry name" value="Anticodon-bd"/>
</dbReference>
<dbReference type="InterPro" id="IPR036621">
    <property type="entry name" value="Anticodon-bd_dom_sf"/>
</dbReference>
<dbReference type="InterPro" id="IPR015807">
    <property type="entry name" value="His-tRNA-ligase"/>
</dbReference>
<dbReference type="InterPro" id="IPR041715">
    <property type="entry name" value="HisRS-like_core"/>
</dbReference>
<dbReference type="InterPro" id="IPR004516">
    <property type="entry name" value="HisRS/HisZ"/>
</dbReference>
<dbReference type="NCBIfam" id="TIGR00442">
    <property type="entry name" value="hisS"/>
    <property type="match status" value="1"/>
</dbReference>
<dbReference type="PANTHER" id="PTHR43707:SF1">
    <property type="entry name" value="HISTIDINE--TRNA LIGASE, MITOCHONDRIAL-RELATED"/>
    <property type="match status" value="1"/>
</dbReference>
<dbReference type="PANTHER" id="PTHR43707">
    <property type="entry name" value="HISTIDYL-TRNA SYNTHETASE"/>
    <property type="match status" value="1"/>
</dbReference>
<dbReference type="Pfam" id="PF03129">
    <property type="entry name" value="HGTP_anticodon"/>
    <property type="match status" value="1"/>
</dbReference>
<dbReference type="Pfam" id="PF13393">
    <property type="entry name" value="tRNA-synt_His"/>
    <property type="match status" value="1"/>
</dbReference>
<dbReference type="PIRSF" id="PIRSF001549">
    <property type="entry name" value="His-tRNA_synth"/>
    <property type="match status" value="1"/>
</dbReference>
<dbReference type="SUPFAM" id="SSF52954">
    <property type="entry name" value="Class II aaRS ABD-related"/>
    <property type="match status" value="1"/>
</dbReference>
<dbReference type="SUPFAM" id="SSF55681">
    <property type="entry name" value="Class II aaRS and biotin synthetases"/>
    <property type="match status" value="1"/>
</dbReference>
<dbReference type="PROSITE" id="PS50862">
    <property type="entry name" value="AA_TRNA_LIGASE_II"/>
    <property type="match status" value="1"/>
</dbReference>
<protein>
    <recommendedName>
        <fullName evidence="1">Histidine--tRNA ligase</fullName>
        <ecNumber evidence="1">6.1.1.21</ecNumber>
    </recommendedName>
    <alternativeName>
        <fullName evidence="1">Histidyl-tRNA synthetase</fullName>
        <shortName evidence="1">HisRS</shortName>
    </alternativeName>
</protein>
<reference key="1">
    <citation type="journal article" date="2016" name="Front. Microbiol.">
        <title>The complete genome sequence of hyperthermophile Dictyoglomus turgidum DSM 6724 reveals a specialized carbohydrate fermentor.</title>
        <authorList>
            <person name="Brumm P.J."/>
            <person name="Gowda K."/>
            <person name="Robb F.T."/>
            <person name="Mead D.A."/>
        </authorList>
    </citation>
    <scope>NUCLEOTIDE SEQUENCE [LARGE SCALE GENOMIC DNA]</scope>
    <source>
        <strain>DSM 6724 / Z-1310</strain>
    </source>
</reference>
<name>SYH_DICTD</name>
<feature type="chain" id="PRO_1000199128" description="Histidine--tRNA ligase">
    <location>
        <begin position="1"/>
        <end position="411"/>
    </location>
</feature>
<keyword id="KW-0030">Aminoacyl-tRNA synthetase</keyword>
<keyword id="KW-0067">ATP-binding</keyword>
<keyword id="KW-0963">Cytoplasm</keyword>
<keyword id="KW-0436">Ligase</keyword>
<keyword id="KW-0547">Nucleotide-binding</keyword>
<keyword id="KW-0648">Protein biosynthesis</keyword>
<keyword id="KW-1185">Reference proteome</keyword>